<reference key="1">
    <citation type="submission" date="2004-07" db="EMBL/GenBank/DDBJ databases">
        <authorList>
            <consortium name="NIH - Zebrafish Gene Collection (ZGC) project"/>
        </authorList>
    </citation>
    <scope>NUCLEOTIDE SEQUENCE [LARGE SCALE MRNA]</scope>
</reference>
<dbReference type="EMBL" id="BC075916">
    <property type="protein sequence ID" value="AAH75916.1"/>
    <property type="molecule type" value="mRNA"/>
</dbReference>
<dbReference type="RefSeq" id="NP_001002346.1">
    <property type="nucleotide sequence ID" value="NM_001002346.1"/>
</dbReference>
<dbReference type="SMR" id="Q6DHQ1"/>
<dbReference type="FunCoup" id="Q6DHQ1">
    <property type="interactions" value="33"/>
</dbReference>
<dbReference type="STRING" id="7955.ENSDARP00000059027"/>
<dbReference type="PaxDb" id="7955-ENSDARP00000059027"/>
<dbReference type="GeneID" id="436618"/>
<dbReference type="KEGG" id="dre:436618"/>
<dbReference type="AGR" id="ZFIN:ZDB-GENE-040718-36"/>
<dbReference type="CTD" id="84329"/>
<dbReference type="ZFIN" id="ZDB-GENE-040718-36">
    <property type="gene designation" value="hvcn1"/>
</dbReference>
<dbReference type="eggNOG" id="ENOG502RX8B">
    <property type="taxonomic scope" value="Eukaryota"/>
</dbReference>
<dbReference type="InParanoid" id="Q6DHQ1"/>
<dbReference type="OrthoDB" id="427456at2759"/>
<dbReference type="PhylomeDB" id="Q6DHQ1"/>
<dbReference type="Reactome" id="R-DRE-1222556">
    <property type="pathway name" value="ROS and RNS production in phagocytes"/>
</dbReference>
<dbReference type="Reactome" id="R-DRE-1300642">
    <property type="pathway name" value="Sperm Motility And Taxes"/>
</dbReference>
<dbReference type="Reactome" id="R-DRE-6798695">
    <property type="pathway name" value="Neutrophil degranulation"/>
</dbReference>
<dbReference type="PRO" id="PR:Q6DHQ1"/>
<dbReference type="Proteomes" id="UP000000437">
    <property type="component" value="Chromosome 10"/>
</dbReference>
<dbReference type="GO" id="GO:0034702">
    <property type="term" value="C:monoatomic ion channel complex"/>
    <property type="evidence" value="ECO:0007669"/>
    <property type="project" value="UniProtKB-KW"/>
</dbReference>
<dbReference type="GO" id="GO:0005886">
    <property type="term" value="C:plasma membrane"/>
    <property type="evidence" value="ECO:0000314"/>
    <property type="project" value="ZFIN"/>
</dbReference>
<dbReference type="GO" id="GO:0030171">
    <property type="term" value="F:voltage-gated proton channel activity"/>
    <property type="evidence" value="ECO:0000314"/>
    <property type="project" value="ZFIN"/>
</dbReference>
<dbReference type="GO" id="GO:0008270">
    <property type="term" value="F:zinc ion binding"/>
    <property type="evidence" value="ECO:0000314"/>
    <property type="project" value="ZFIN"/>
</dbReference>
<dbReference type="GO" id="GO:0071467">
    <property type="term" value="P:cellular response to pH"/>
    <property type="evidence" value="ECO:0000250"/>
    <property type="project" value="UniProtKB"/>
</dbReference>
<dbReference type="GO" id="GO:0071294">
    <property type="term" value="P:cellular response to zinc ion"/>
    <property type="evidence" value="ECO:0000250"/>
    <property type="project" value="UniProtKB"/>
</dbReference>
<dbReference type="GO" id="GO:1902600">
    <property type="term" value="P:proton transmembrane transport"/>
    <property type="evidence" value="ECO:0000314"/>
    <property type="project" value="ZFIN"/>
</dbReference>
<dbReference type="GO" id="GO:0010043">
    <property type="term" value="P:response to zinc ion"/>
    <property type="evidence" value="ECO:0000314"/>
    <property type="project" value="ZFIN"/>
</dbReference>
<dbReference type="FunFam" id="1.20.120.350:FF:000054">
    <property type="entry name" value="voltage-gated hydrogen channel 1"/>
    <property type="match status" value="1"/>
</dbReference>
<dbReference type="Gene3D" id="1.20.5.170">
    <property type="match status" value="1"/>
</dbReference>
<dbReference type="Gene3D" id="1.20.120.350">
    <property type="entry name" value="Voltage-gated potassium channels. Chain C"/>
    <property type="match status" value="1"/>
</dbReference>
<dbReference type="InterPro" id="IPR031846">
    <property type="entry name" value="Hvcn1"/>
</dbReference>
<dbReference type="InterPro" id="IPR005821">
    <property type="entry name" value="Ion_trans_dom"/>
</dbReference>
<dbReference type="InterPro" id="IPR027359">
    <property type="entry name" value="Volt_channel_dom_sf"/>
</dbReference>
<dbReference type="PANTHER" id="PTHR46480">
    <property type="entry name" value="F20B24.22"/>
    <property type="match status" value="1"/>
</dbReference>
<dbReference type="PANTHER" id="PTHR46480:SF1">
    <property type="entry name" value="VOLTAGE-GATED HYDROGEN CHANNEL 1"/>
    <property type="match status" value="1"/>
</dbReference>
<dbReference type="Pfam" id="PF00520">
    <property type="entry name" value="Ion_trans"/>
    <property type="match status" value="1"/>
</dbReference>
<dbReference type="SUPFAM" id="SSF81324">
    <property type="entry name" value="Voltage-gated potassium channels"/>
    <property type="match status" value="1"/>
</dbReference>
<evidence type="ECO:0000250" key="1"/>
<evidence type="ECO:0000255" key="2"/>
<evidence type="ECO:0000305" key="3"/>
<gene>
    <name type="primary">hvcn1</name>
    <name type="ORF">zgc:92181</name>
</gene>
<comment type="function">
    <text evidence="1">Mediates the voltage-dependent proton permeability of excitable membranes. Forms a proton-selective channel through which protons may pass in accordance with their electrochemical gradient (By similarity).</text>
</comment>
<comment type="subunit">
    <text evidence="1">Homodimer.</text>
</comment>
<comment type="subcellular location">
    <subcellularLocation>
        <location evidence="3">Membrane</location>
        <topology evidence="3">Multi-pass membrane protein</topology>
    </subcellularLocation>
    <subcellularLocation>
        <location evidence="1">Cell membrane</location>
        <topology evidence="1">Multi-pass membrane protein</topology>
    </subcellularLocation>
</comment>
<comment type="domain">
    <text evidence="1">The segment S4 is probably the voltage-sensor and is characterized by a series of positively charged amino acids at every third position. Unlike other voltage-gated ion channels it lacks the pore domain (By similarity).</text>
</comment>
<comment type="domain">
    <text evidence="1">The C-terminal coiled coil region mediates homodimerization. It is essential for normal subcellular localization (By similarity).</text>
</comment>
<comment type="similarity">
    <text evidence="3">Belongs to the hydrogen channel family.</text>
</comment>
<protein>
    <recommendedName>
        <fullName>Voltage-gated hydrogen channel 1</fullName>
    </recommendedName>
    <alternativeName>
        <fullName>Hydrogen voltage-gated channel 1</fullName>
        <shortName>HV1</shortName>
    </alternativeName>
</protein>
<sequence length="235" mass="27110">MSRYLKHFTAVGDNKSAVPTWHEEDTSHHVTTLHDAPDGLEVSTGQHLGQLSFRDSLRKLYSTERFQIVVVCLVVLDAIFVLCELLIDLSIIEADHHRIAPQVFHYLSLALLTFFMVELAGKIFAYRLEFLHHKFEVFDGIVVVVSFILDIIYISKEDAFDAMGLLILLRLWRVARIINGILVSVQNRANHRVEKLKEINESLVHQVNELKEQNTKMDQENVRLRALLKDHSIDF</sequence>
<feature type="chain" id="PRO_0000342190" description="Voltage-gated hydrogen channel 1">
    <location>
        <begin position="1"/>
        <end position="235"/>
    </location>
</feature>
<feature type="topological domain" description="Cytoplasmic" evidence="1">
    <location>
        <begin position="1"/>
        <end position="65"/>
    </location>
</feature>
<feature type="transmembrane region" description="Helical; Name=Segment S1" evidence="1">
    <location>
        <begin position="66"/>
        <end position="86"/>
    </location>
</feature>
<feature type="topological domain" description="Extracellular" evidence="1">
    <location>
        <begin position="87"/>
        <end position="103"/>
    </location>
</feature>
<feature type="transmembrane region" description="Helical; Name=Segment S2" evidence="1">
    <location>
        <begin position="104"/>
        <end position="126"/>
    </location>
</feature>
<feature type="topological domain" description="Cytoplasmic" evidence="1">
    <location>
        <begin position="127"/>
        <end position="134"/>
    </location>
</feature>
<feature type="transmembrane region" description="Helical; Name=Segment S3" evidence="1">
    <location>
        <begin position="135"/>
        <end position="155"/>
    </location>
</feature>
<feature type="topological domain" description="Extracellular" evidence="1">
    <location>
        <begin position="156"/>
        <end position="162"/>
    </location>
</feature>
<feature type="transmembrane region" description="Helical; Name=Segment S4" evidence="1">
    <location>
        <begin position="163"/>
        <end position="183"/>
    </location>
</feature>
<feature type="topological domain" description="Cytoplasmic" evidence="1">
    <location>
        <begin position="184"/>
        <end position="235"/>
    </location>
</feature>
<feature type="coiled-coil region" evidence="2">
    <location>
        <begin position="187"/>
        <end position="231"/>
    </location>
</feature>
<name>HVCN1_DANRE</name>
<proteinExistence type="evidence at transcript level"/>
<accession>Q6DHQ1</accession>
<keyword id="KW-1003">Cell membrane</keyword>
<keyword id="KW-0175">Coiled coil</keyword>
<keyword id="KW-0407">Ion channel</keyword>
<keyword id="KW-0406">Ion transport</keyword>
<keyword id="KW-0472">Membrane</keyword>
<keyword id="KW-1185">Reference proteome</keyword>
<keyword id="KW-0812">Transmembrane</keyword>
<keyword id="KW-1133">Transmembrane helix</keyword>
<keyword id="KW-0813">Transport</keyword>
<keyword id="KW-0851">Voltage-gated channel</keyword>
<organism>
    <name type="scientific">Danio rerio</name>
    <name type="common">Zebrafish</name>
    <name type="synonym">Brachydanio rerio</name>
    <dbReference type="NCBI Taxonomy" id="7955"/>
    <lineage>
        <taxon>Eukaryota</taxon>
        <taxon>Metazoa</taxon>
        <taxon>Chordata</taxon>
        <taxon>Craniata</taxon>
        <taxon>Vertebrata</taxon>
        <taxon>Euteleostomi</taxon>
        <taxon>Actinopterygii</taxon>
        <taxon>Neopterygii</taxon>
        <taxon>Teleostei</taxon>
        <taxon>Ostariophysi</taxon>
        <taxon>Cypriniformes</taxon>
        <taxon>Danionidae</taxon>
        <taxon>Danioninae</taxon>
        <taxon>Danio</taxon>
    </lineage>
</organism>